<accession>Q0VG73</accession>
<accession>Q0VG74</accession>
<evidence type="ECO:0000256" key="1">
    <source>
        <dbReference type="SAM" id="MobiDB-lite"/>
    </source>
</evidence>
<evidence type="ECO:0000269" key="2">
    <source>
    </source>
</evidence>
<evidence type="ECO:0000269" key="3">
    <source>
    </source>
</evidence>
<evidence type="ECO:0000305" key="4"/>
<evidence type="ECO:0000305" key="5">
    <source>
    </source>
</evidence>
<evidence type="ECO:0000312" key="6">
    <source>
        <dbReference type="HGNC" id="HGNC:27190"/>
    </source>
</evidence>
<sequence>MNNSFNKEDRMSSDTMVGSCDRQTKNGAKWHGGVSSLLDFTLIYIQLSTSFQNAGHSFKKQHICSDFEVMDELSCAVYGNKFYYLLPTLTHPSIQ</sequence>
<comment type="function">
    <text evidence="3">Could play a role in innate immunity against viruses.</text>
</comment>
<comment type="interaction">
    <interactant intactId="EBI-25953074">
        <id>Q0VG73</id>
    </interactant>
    <interactant intactId="EBI-466029">
        <id>P42858</id>
        <label>HTT</label>
    </interactant>
    <organismsDiffer>false</organismsDiffer>
    <experiments>6</experiments>
</comment>
<comment type="caution">
    <text evidence="3 4 5">Product of a dubious CDS prediction. The authors could not detect any expression of the protein and consider RDUR as a long non-coding RNA (PubMed:34054851). However, there is some limited evidence of translation from proteomics experiments.</text>
</comment>
<organism>
    <name type="scientific">Homo sapiens</name>
    <name type="common">Human</name>
    <dbReference type="NCBI Taxonomy" id="9606"/>
    <lineage>
        <taxon>Eukaryota</taxon>
        <taxon>Metazoa</taxon>
        <taxon>Chordata</taxon>
        <taxon>Craniata</taxon>
        <taxon>Vertebrata</taxon>
        <taxon>Euteleostomi</taxon>
        <taxon>Mammalia</taxon>
        <taxon>Eutheria</taxon>
        <taxon>Euarchontoglires</taxon>
        <taxon>Primates</taxon>
        <taxon>Haplorrhini</taxon>
        <taxon>Catarrhini</taxon>
        <taxon>Hominidae</taxon>
        <taxon>Homo</taxon>
    </lineage>
</organism>
<proteinExistence type="uncertain"/>
<feature type="chain" id="PRO_0000341209" description="Putative protein RDUR">
    <location>
        <begin position="1"/>
        <end position="95"/>
    </location>
</feature>
<feature type="region of interest" description="Disordered" evidence="1">
    <location>
        <begin position="1"/>
        <end position="20"/>
    </location>
</feature>
<feature type="compositionally biased region" description="Basic and acidic residues" evidence="1">
    <location>
        <begin position="1"/>
        <end position="12"/>
    </location>
</feature>
<feature type="sequence variant" id="VAR_044030" description="In dbSNP:rs12629299.">
    <original>S</original>
    <variation>R</variation>
    <location>
        <position position="19"/>
    </location>
</feature>
<feature type="sequence variant" id="VAR_044031" description="In dbSNP:rs10936873." evidence="2">
    <original>I</original>
    <variation>M</variation>
    <location>
        <position position="63"/>
    </location>
</feature>
<protein>
    <recommendedName>
        <fullName evidence="5">Putative protein RDUR</fullName>
    </recommendedName>
    <alternativeName>
        <fullName evidence="6">RIG-I dependent antiviral response regulator RNA</fullName>
    </alternativeName>
</protein>
<dbReference type="EMBL" id="AC106712">
    <property type="status" value="NOT_ANNOTATED_CDS"/>
    <property type="molecule type" value="Genomic_DNA"/>
</dbReference>
<dbReference type="EMBL" id="CH471052">
    <property type="protein sequence ID" value="EAW79769.1"/>
    <property type="molecule type" value="Genomic_DNA"/>
</dbReference>
<dbReference type="EMBL" id="BC113576">
    <property type="status" value="NOT_ANNOTATED_CDS"/>
    <property type="molecule type" value="mRNA"/>
</dbReference>
<dbReference type="IntAct" id="Q0VG73">
    <property type="interactions" value="1"/>
</dbReference>
<dbReference type="BioMuta" id="-"/>
<dbReference type="PeptideAtlas" id="Q0VG73"/>
<dbReference type="AGR" id="HGNC:27190"/>
<dbReference type="HGNC" id="HGNC:27190">
    <property type="gene designation" value="RDUR"/>
</dbReference>
<dbReference type="neXtProt" id="NX_Q0VG73"/>
<dbReference type="InParanoid" id="Q0VG73"/>
<dbReference type="PAN-GO" id="Q0VG73">
    <property type="GO annotations" value="0 GO annotations based on evolutionary models"/>
</dbReference>
<dbReference type="PathwayCommons" id="Q0VG73"/>
<dbReference type="Pharos" id="Q0VG73">
    <property type="development level" value="Tdark"/>
</dbReference>
<dbReference type="Proteomes" id="UP000005640">
    <property type="component" value="Unplaced"/>
</dbReference>
<dbReference type="RNAct" id="Q0VG73">
    <property type="molecule type" value="protein"/>
</dbReference>
<dbReference type="GO" id="GO:0045087">
    <property type="term" value="P:innate immune response"/>
    <property type="evidence" value="ECO:0007669"/>
    <property type="project" value="UniProtKB-KW"/>
</dbReference>
<gene>
    <name evidence="6" type="primary">RDUR</name>
    <name evidence="6" type="synonym">LINC02085</name>
</gene>
<name>RDUR_HUMAN</name>
<keyword id="KW-0391">Immunity</keyword>
<keyword id="KW-0399">Innate immunity</keyword>
<keyword id="KW-1185">Reference proteome</keyword>
<reference key="1">
    <citation type="journal article" date="2006" name="Nature">
        <title>The DNA sequence, annotation and analysis of human chromosome 3.</title>
        <authorList>
            <person name="Muzny D.M."/>
            <person name="Scherer S.E."/>
            <person name="Kaul R."/>
            <person name="Wang J."/>
            <person name="Yu J."/>
            <person name="Sudbrak R."/>
            <person name="Buhay C.J."/>
            <person name="Chen R."/>
            <person name="Cree A."/>
            <person name="Ding Y."/>
            <person name="Dugan-Rocha S."/>
            <person name="Gill R."/>
            <person name="Gunaratne P."/>
            <person name="Harris R.A."/>
            <person name="Hawes A.C."/>
            <person name="Hernandez J."/>
            <person name="Hodgson A.V."/>
            <person name="Hume J."/>
            <person name="Jackson A."/>
            <person name="Khan Z.M."/>
            <person name="Kovar-Smith C."/>
            <person name="Lewis L.R."/>
            <person name="Lozado R.J."/>
            <person name="Metzker M.L."/>
            <person name="Milosavljevic A."/>
            <person name="Miner G.R."/>
            <person name="Morgan M.B."/>
            <person name="Nazareth L.V."/>
            <person name="Scott G."/>
            <person name="Sodergren E."/>
            <person name="Song X.-Z."/>
            <person name="Steffen D."/>
            <person name="Wei S."/>
            <person name="Wheeler D.A."/>
            <person name="Wright M.W."/>
            <person name="Worley K.C."/>
            <person name="Yuan Y."/>
            <person name="Zhang Z."/>
            <person name="Adams C.Q."/>
            <person name="Ansari-Lari M.A."/>
            <person name="Ayele M."/>
            <person name="Brown M.J."/>
            <person name="Chen G."/>
            <person name="Chen Z."/>
            <person name="Clendenning J."/>
            <person name="Clerc-Blankenburg K.P."/>
            <person name="Chen R."/>
            <person name="Chen Z."/>
            <person name="Davis C."/>
            <person name="Delgado O."/>
            <person name="Dinh H.H."/>
            <person name="Dong W."/>
            <person name="Draper H."/>
            <person name="Ernst S."/>
            <person name="Fu G."/>
            <person name="Gonzalez-Garay M.L."/>
            <person name="Garcia D.K."/>
            <person name="Gillett W."/>
            <person name="Gu J."/>
            <person name="Hao B."/>
            <person name="Haugen E."/>
            <person name="Havlak P."/>
            <person name="He X."/>
            <person name="Hennig S."/>
            <person name="Hu S."/>
            <person name="Huang W."/>
            <person name="Jackson L.R."/>
            <person name="Jacob L.S."/>
            <person name="Kelly S.H."/>
            <person name="Kube M."/>
            <person name="Levy R."/>
            <person name="Li Z."/>
            <person name="Liu B."/>
            <person name="Liu J."/>
            <person name="Liu W."/>
            <person name="Lu J."/>
            <person name="Maheshwari M."/>
            <person name="Nguyen B.-V."/>
            <person name="Okwuonu G.O."/>
            <person name="Palmeiri A."/>
            <person name="Pasternak S."/>
            <person name="Perez L.M."/>
            <person name="Phelps K.A."/>
            <person name="Plopper F.J."/>
            <person name="Qiang B."/>
            <person name="Raymond C."/>
            <person name="Rodriguez R."/>
            <person name="Saenphimmachak C."/>
            <person name="Santibanez J."/>
            <person name="Shen H."/>
            <person name="Shen Y."/>
            <person name="Subramanian S."/>
            <person name="Tabor P.E."/>
            <person name="Verduzco D."/>
            <person name="Waldron L."/>
            <person name="Wang J."/>
            <person name="Wang J."/>
            <person name="Wang Q."/>
            <person name="Williams G.A."/>
            <person name="Wong G.K.-S."/>
            <person name="Yao Z."/>
            <person name="Zhang J."/>
            <person name="Zhang X."/>
            <person name="Zhao G."/>
            <person name="Zhou J."/>
            <person name="Zhou Y."/>
            <person name="Nelson D."/>
            <person name="Lehrach H."/>
            <person name="Reinhardt R."/>
            <person name="Naylor S.L."/>
            <person name="Yang H."/>
            <person name="Olson M."/>
            <person name="Weinstock G."/>
            <person name="Gibbs R.A."/>
        </authorList>
    </citation>
    <scope>NUCLEOTIDE SEQUENCE [LARGE SCALE GENOMIC DNA]</scope>
</reference>
<reference key="2">
    <citation type="submission" date="2005-09" db="EMBL/GenBank/DDBJ databases">
        <authorList>
            <person name="Mural R.J."/>
            <person name="Istrail S."/>
            <person name="Sutton G.G."/>
            <person name="Florea L."/>
            <person name="Halpern A.L."/>
            <person name="Mobarry C.M."/>
            <person name="Lippert R."/>
            <person name="Walenz B."/>
            <person name="Shatkay H."/>
            <person name="Dew I."/>
            <person name="Miller J.R."/>
            <person name="Flanigan M.J."/>
            <person name="Edwards N.J."/>
            <person name="Bolanos R."/>
            <person name="Fasulo D."/>
            <person name="Halldorsson B.V."/>
            <person name="Hannenhalli S."/>
            <person name="Turner R."/>
            <person name="Yooseph S."/>
            <person name="Lu F."/>
            <person name="Nusskern D.R."/>
            <person name="Shue B.C."/>
            <person name="Zheng X.H."/>
            <person name="Zhong F."/>
            <person name="Delcher A.L."/>
            <person name="Huson D.H."/>
            <person name="Kravitz S.A."/>
            <person name="Mouchard L."/>
            <person name="Reinert K."/>
            <person name="Remington K.A."/>
            <person name="Clark A.G."/>
            <person name="Waterman M.S."/>
            <person name="Eichler E.E."/>
            <person name="Adams M.D."/>
            <person name="Hunkapiller M.W."/>
            <person name="Myers E.W."/>
            <person name="Venter J.C."/>
        </authorList>
    </citation>
    <scope>NUCLEOTIDE SEQUENCE [LARGE SCALE GENOMIC DNA]</scope>
</reference>
<reference key="3">
    <citation type="journal article" date="2004" name="Genome Res.">
        <title>The status, quality, and expansion of the NIH full-length cDNA project: the Mammalian Gene Collection (MGC).</title>
        <authorList>
            <consortium name="The MGC Project Team"/>
        </authorList>
    </citation>
    <scope>NUCLEOTIDE SEQUENCE [LARGE SCALE MRNA]</scope>
    <scope>VARIANT MET-63</scope>
</reference>
<reference key="4">
    <citation type="journal article" date="2021" name="Front. Immunol.">
        <title>RDUR, a lncRNA, Promotes Innate Antiviral Responses and Provides Feedback Control of NF-kappaB Activation.</title>
        <authorList>
            <person name="Chen Y."/>
            <person name="Hu J."/>
            <person name="Liu S."/>
            <person name="Chen B."/>
            <person name="Xiao M."/>
            <person name="Li Y."/>
            <person name="Liao Y."/>
            <person name="Rai K.R."/>
            <person name="Zhao Z."/>
            <person name="Ouyang J."/>
            <person name="Pan Q."/>
            <person name="Zhang L."/>
            <person name="Huang S."/>
            <person name="Chen J.L."/>
        </authorList>
    </citation>
    <scope>FUNCTION</scope>
    <scope>CAUTION</scope>
</reference>